<reference key="1">
    <citation type="journal article" date="2006" name="J. Bacteriol.">
        <title>Whole-genome sequence of Listeria welshimeri reveals common steps in genome reduction with Listeria innocua as compared to Listeria monocytogenes.</title>
        <authorList>
            <person name="Hain T."/>
            <person name="Steinweg C."/>
            <person name="Kuenne C.T."/>
            <person name="Billion A."/>
            <person name="Ghai R."/>
            <person name="Chatterjee S.S."/>
            <person name="Domann E."/>
            <person name="Kaerst U."/>
            <person name="Goesmann A."/>
            <person name="Bekel T."/>
            <person name="Bartels D."/>
            <person name="Kaiser O."/>
            <person name="Meyer F."/>
            <person name="Puehler A."/>
            <person name="Weisshaar B."/>
            <person name="Wehland J."/>
            <person name="Liang C."/>
            <person name="Dandekar T."/>
            <person name="Lampidis R."/>
            <person name="Kreft J."/>
            <person name="Goebel W."/>
            <person name="Chakraborty T."/>
        </authorList>
    </citation>
    <scope>NUCLEOTIDE SEQUENCE [LARGE SCALE GENOMIC DNA]</scope>
    <source>
        <strain>ATCC 35897 / DSM 20650 / CCUG 15529 / CIP 8149 / NCTC 11857 / SLCC 5334 / V8</strain>
    </source>
</reference>
<accession>A0AIH1</accession>
<name>BUK_LISW6</name>
<organism>
    <name type="scientific">Listeria welshimeri serovar 6b (strain ATCC 35897 / DSM 20650 / CCUG 15529 / CIP 8149 / NCTC 11857 / SLCC 5334 / V8)</name>
    <dbReference type="NCBI Taxonomy" id="386043"/>
    <lineage>
        <taxon>Bacteria</taxon>
        <taxon>Bacillati</taxon>
        <taxon>Bacillota</taxon>
        <taxon>Bacilli</taxon>
        <taxon>Bacillales</taxon>
        <taxon>Listeriaceae</taxon>
        <taxon>Listeria</taxon>
    </lineage>
</organism>
<protein>
    <recommendedName>
        <fullName evidence="1">Probable butyrate kinase</fullName>
        <shortName evidence="1">BK</shortName>
        <ecNumber evidence="1">2.7.2.7</ecNumber>
    </recommendedName>
    <alternativeName>
        <fullName evidence="1">Branched-chain carboxylic acid kinase</fullName>
    </alternativeName>
</protein>
<keyword id="KW-0067">ATP-binding</keyword>
<keyword id="KW-0963">Cytoplasm</keyword>
<keyword id="KW-0418">Kinase</keyword>
<keyword id="KW-0547">Nucleotide-binding</keyword>
<keyword id="KW-0808">Transferase</keyword>
<proteinExistence type="inferred from homology"/>
<dbReference type="EC" id="2.7.2.7" evidence="1"/>
<dbReference type="EMBL" id="AM263198">
    <property type="protein sequence ID" value="CAK20803.1"/>
    <property type="molecule type" value="Genomic_DNA"/>
</dbReference>
<dbReference type="RefSeq" id="WP_011702183.1">
    <property type="nucleotide sequence ID" value="NC_008555.1"/>
</dbReference>
<dbReference type="SMR" id="A0AIH1"/>
<dbReference type="STRING" id="386043.lwe1385"/>
<dbReference type="GeneID" id="61189261"/>
<dbReference type="KEGG" id="lwe:lwe1385"/>
<dbReference type="eggNOG" id="COG3426">
    <property type="taxonomic scope" value="Bacteria"/>
</dbReference>
<dbReference type="HOGENOM" id="CLU_048716_0_0_9"/>
<dbReference type="OrthoDB" id="9771859at2"/>
<dbReference type="Proteomes" id="UP000000779">
    <property type="component" value="Chromosome"/>
</dbReference>
<dbReference type="GO" id="GO:0005737">
    <property type="term" value="C:cytoplasm"/>
    <property type="evidence" value="ECO:0007669"/>
    <property type="project" value="UniProtKB-SubCell"/>
</dbReference>
<dbReference type="GO" id="GO:0008776">
    <property type="term" value="F:acetate kinase activity"/>
    <property type="evidence" value="ECO:0007669"/>
    <property type="project" value="TreeGrafter"/>
</dbReference>
<dbReference type="GO" id="GO:0005524">
    <property type="term" value="F:ATP binding"/>
    <property type="evidence" value="ECO:0007669"/>
    <property type="project" value="UniProtKB-KW"/>
</dbReference>
<dbReference type="GO" id="GO:0047761">
    <property type="term" value="F:butyrate kinase activity"/>
    <property type="evidence" value="ECO:0007669"/>
    <property type="project" value="UniProtKB-UniRule"/>
</dbReference>
<dbReference type="GO" id="GO:0006083">
    <property type="term" value="P:acetate metabolic process"/>
    <property type="evidence" value="ECO:0007669"/>
    <property type="project" value="TreeGrafter"/>
</dbReference>
<dbReference type="CDD" id="cd24011">
    <property type="entry name" value="ASKHA_NBD_BK"/>
    <property type="match status" value="1"/>
</dbReference>
<dbReference type="FunFam" id="3.30.420.40:FF:000233">
    <property type="entry name" value="Probable butyrate kinase"/>
    <property type="match status" value="1"/>
</dbReference>
<dbReference type="Gene3D" id="3.30.420.40">
    <property type="match status" value="2"/>
</dbReference>
<dbReference type="HAMAP" id="MF_00542">
    <property type="entry name" value="Butyrate_kinase"/>
    <property type="match status" value="1"/>
</dbReference>
<dbReference type="InterPro" id="IPR000890">
    <property type="entry name" value="Aliphatic_acid_kin_short-chain"/>
</dbReference>
<dbReference type="InterPro" id="IPR023865">
    <property type="entry name" value="Aliphatic_acid_kinase_CS"/>
</dbReference>
<dbReference type="InterPro" id="IPR043129">
    <property type="entry name" value="ATPase_NBD"/>
</dbReference>
<dbReference type="InterPro" id="IPR011245">
    <property type="entry name" value="Butyrate_kin"/>
</dbReference>
<dbReference type="NCBIfam" id="TIGR02707">
    <property type="entry name" value="butyr_kinase"/>
    <property type="match status" value="1"/>
</dbReference>
<dbReference type="NCBIfam" id="NF002834">
    <property type="entry name" value="PRK03011.1-5"/>
    <property type="match status" value="1"/>
</dbReference>
<dbReference type="PANTHER" id="PTHR21060">
    <property type="entry name" value="ACETATE KINASE"/>
    <property type="match status" value="1"/>
</dbReference>
<dbReference type="PANTHER" id="PTHR21060:SF3">
    <property type="entry name" value="BUTYRATE KINASE 2-RELATED"/>
    <property type="match status" value="1"/>
</dbReference>
<dbReference type="Pfam" id="PF00871">
    <property type="entry name" value="Acetate_kinase"/>
    <property type="match status" value="1"/>
</dbReference>
<dbReference type="PIRSF" id="PIRSF036458">
    <property type="entry name" value="Butyrate_kin"/>
    <property type="match status" value="1"/>
</dbReference>
<dbReference type="PRINTS" id="PR00471">
    <property type="entry name" value="ACETATEKNASE"/>
</dbReference>
<dbReference type="SUPFAM" id="SSF53067">
    <property type="entry name" value="Actin-like ATPase domain"/>
    <property type="match status" value="2"/>
</dbReference>
<dbReference type="PROSITE" id="PS01075">
    <property type="entry name" value="ACETATE_KINASE_1"/>
    <property type="match status" value="1"/>
</dbReference>
<dbReference type="PROSITE" id="PS01076">
    <property type="entry name" value="ACETATE_KINASE_2"/>
    <property type="match status" value="1"/>
</dbReference>
<evidence type="ECO:0000255" key="1">
    <source>
        <dbReference type="HAMAP-Rule" id="MF_00542"/>
    </source>
</evidence>
<sequence>MSFDVLTINPGSTSTKLAVYQGDKVLFEETVRHTMQEFADFNNVQEQFDFRWQVLRRVIDAFGYDVNNLDAVVGRGGLLRPVAGGTYMVTEKMLADLKTNKYGEHASNLGAMLAKKLADTLDIPSFIVDPVVVDEMLPIARFSGNELIARKSIFHALNHKAAGRKIAKKLGSDYEKLNFVIAHLGGGISVAAHRQGKAVDVNNALDGDGPFSPERSGSLPMNDFLEACFSGKWNKRELHDLIIGRGGMISYLGTNSMLEVEAKVKAGDEKAIQAFDAMAYQVSKEIGACSTVLHGKIDAIILTGGLARSDLFTSKIIEQTNWIASVIIEPGEDELEALNSGVQRVLAGLEKEKLY</sequence>
<comment type="catalytic activity">
    <reaction evidence="1">
        <text>butanoate + ATP = butanoyl phosphate + ADP</text>
        <dbReference type="Rhea" id="RHEA:13585"/>
        <dbReference type="ChEBI" id="CHEBI:17968"/>
        <dbReference type="ChEBI" id="CHEBI:30616"/>
        <dbReference type="ChEBI" id="CHEBI:58079"/>
        <dbReference type="ChEBI" id="CHEBI:456216"/>
        <dbReference type="EC" id="2.7.2.7"/>
    </reaction>
</comment>
<comment type="subcellular location">
    <subcellularLocation>
        <location evidence="1">Cytoplasm</location>
    </subcellularLocation>
</comment>
<comment type="similarity">
    <text evidence="1">Belongs to the acetokinase family.</text>
</comment>
<feature type="chain" id="PRO_1000061068" description="Probable butyrate kinase">
    <location>
        <begin position="1"/>
        <end position="355"/>
    </location>
</feature>
<gene>
    <name evidence="1" type="primary">buk</name>
    <name type="ordered locus">lwe1385</name>
</gene>